<sequence>MAALYGGVEGGGTRSKVLLLSEDGQILAEADGLSTNHWLIGTGTCVERINEMVDRAKRKAGVDPLVPLRSLGLSLSGGEQEDAVRLLMEELRDRFPYLSESYFITTDAAGSIATATPDGGIVLISGTGSNCRLINPDGSESGCGGWGHMMGDEGSAYWIAHQAVKIVFDSIDNLEAAPHDIGHVKQAMFNYFQVPDRLGILTHLYRDFDKSKFAGFCQKIAEGAQQGDPLSRFIFRKAGEMLGRHVVAVLPEIDPVLFQGELGLPILCVGSVWKSWELLKEGFLLALTQGREQQAQNSFSSFTLMKLRHSSALGGASLGARHIGHHLPMDYSVNAIAFYSYTF</sequence>
<name>NAGK_RAT</name>
<feature type="initiator methionine" description="Removed" evidence="3">
    <location>
        <position position="1"/>
    </location>
</feature>
<feature type="chain" id="PRO_0000096698" description="N-acetyl-D-glucosamine kinase">
    <location>
        <begin position="2"/>
        <end position="343"/>
    </location>
</feature>
<feature type="binding site" evidence="2">
    <location>
        <position position="13"/>
    </location>
    <ligand>
        <name>ATP</name>
        <dbReference type="ChEBI" id="CHEBI:30616"/>
    </ligand>
</feature>
<feature type="binding site" evidence="2">
    <location>
        <position position="36"/>
    </location>
    <ligand>
        <name>N-acetyl-D-glucosamine</name>
        <dbReference type="ChEBI" id="CHEBI:506227"/>
    </ligand>
</feature>
<feature type="binding site" evidence="2">
    <location>
        <position position="107"/>
    </location>
    <ligand>
        <name>N-acetyl-D-glucosamine</name>
        <dbReference type="ChEBI" id="CHEBI:506227"/>
    </ligand>
</feature>
<feature type="binding site" evidence="2">
    <location>
        <position position="127"/>
    </location>
    <ligand>
        <name>ATP</name>
        <dbReference type="ChEBI" id="CHEBI:30616"/>
    </ligand>
</feature>
<feature type="binding site" evidence="2">
    <location>
        <begin position="129"/>
        <end position="130"/>
    </location>
    <ligand>
        <name>N-acetyl-D-glucosamine</name>
        <dbReference type="ChEBI" id="CHEBI:506227"/>
    </ligand>
</feature>
<feature type="binding site" evidence="2">
    <location>
        <begin position="145"/>
        <end position="147"/>
    </location>
    <ligand>
        <name>N-acetyl-D-glucosamine</name>
        <dbReference type="ChEBI" id="CHEBI:506227"/>
    </ligand>
</feature>
<feature type="binding site" evidence="2">
    <location>
        <position position="152"/>
    </location>
    <ligand>
        <name>N-acetyl-D-glucosamine</name>
        <dbReference type="ChEBI" id="CHEBI:506227"/>
    </ligand>
</feature>
<feature type="binding site" evidence="2">
    <location>
        <position position="214"/>
    </location>
    <ligand>
        <name>ATP</name>
        <dbReference type="ChEBI" id="CHEBI:30616"/>
    </ligand>
</feature>
<feature type="binding site" evidence="2">
    <location>
        <position position="271"/>
    </location>
    <ligand>
        <name>ATP</name>
        <dbReference type="ChEBI" id="CHEBI:30616"/>
    </ligand>
</feature>
<feature type="binding site" evidence="2">
    <location>
        <position position="275"/>
    </location>
    <ligand>
        <name>ATP</name>
        <dbReference type="ChEBI" id="CHEBI:30616"/>
    </ligand>
</feature>
<feature type="modified residue" description="N-acetylalanine" evidence="3">
    <location>
        <position position="2"/>
    </location>
</feature>
<feature type="modified residue" description="Phosphoserine" evidence="5">
    <location>
        <position position="76"/>
    </location>
</feature>
<feature type="modified residue" description="Phosphotyrosine" evidence="2">
    <location>
        <position position="205"/>
    </location>
</feature>
<feature type="sequence conflict" description="In Ref. 2; AA sequence." evidence="4" ref="2">
    <original>D</original>
    <variation>T</variation>
    <location>
        <position position="207"/>
    </location>
</feature>
<feature type="sequence conflict" description="In Ref. 2; AA sequence." evidence="4" ref="2">
    <original>Q</original>
    <variation>E</variation>
    <location>
        <position position="226"/>
    </location>
</feature>
<feature type="sequence conflict" description="In Ref. 2; AA sequence." evidence="4" ref="2">
    <original>H</original>
    <variation>I</variation>
    <location>
        <position position="309"/>
    </location>
</feature>
<evidence type="ECO:0000250" key="1">
    <source>
        <dbReference type="UniProtKB" id="Q9QZ08"/>
    </source>
</evidence>
<evidence type="ECO:0000250" key="2">
    <source>
        <dbReference type="UniProtKB" id="Q9UJ70"/>
    </source>
</evidence>
<evidence type="ECO:0000269" key="3">
    <source>
    </source>
</evidence>
<evidence type="ECO:0000305" key="4"/>
<evidence type="ECO:0007744" key="5">
    <source>
    </source>
</evidence>
<accession>P81799</accession>
<accession>Q32Q91</accession>
<proteinExistence type="evidence at protein level"/>
<dbReference type="EC" id="2.7.1.59" evidence="3"/>
<dbReference type="EC" id="2.7.1.-" evidence="2"/>
<dbReference type="EC" id="2.7.1.60" evidence="1"/>
<dbReference type="EMBL" id="BC107647">
    <property type="protein sequence ID" value="AAI07648.1"/>
    <property type="molecule type" value="mRNA"/>
</dbReference>
<dbReference type="RefSeq" id="NP_001032857.1">
    <property type="nucleotide sequence ID" value="NM_001037768.1"/>
</dbReference>
<dbReference type="SMR" id="P81799"/>
<dbReference type="FunCoup" id="P81799">
    <property type="interactions" value="1798"/>
</dbReference>
<dbReference type="IntAct" id="P81799">
    <property type="interactions" value="1"/>
</dbReference>
<dbReference type="STRING" id="10116.ENSRNOP00000039247"/>
<dbReference type="iPTMnet" id="P81799"/>
<dbReference type="PhosphoSitePlus" id="P81799"/>
<dbReference type="jPOST" id="P81799"/>
<dbReference type="PaxDb" id="10116-ENSRNOP00000039247"/>
<dbReference type="Ensembl" id="ENSRNOT00000108444.1">
    <property type="protein sequence ID" value="ENSRNOP00000084218.1"/>
    <property type="gene ID" value="ENSRNOG00000013911.7"/>
</dbReference>
<dbReference type="GeneID" id="297393"/>
<dbReference type="KEGG" id="rno:297393"/>
<dbReference type="UCSC" id="RGD:1305057">
    <property type="organism name" value="rat"/>
</dbReference>
<dbReference type="AGR" id="RGD:1305057"/>
<dbReference type="CTD" id="55577"/>
<dbReference type="RGD" id="1305057">
    <property type="gene designation" value="Nagk"/>
</dbReference>
<dbReference type="eggNOG" id="KOG1794">
    <property type="taxonomic scope" value="Eukaryota"/>
</dbReference>
<dbReference type="GeneTree" id="ENSGT00510000047418"/>
<dbReference type="HOGENOM" id="CLU_016274_0_0_1"/>
<dbReference type="InParanoid" id="P81799"/>
<dbReference type="OMA" id="IETRYDM"/>
<dbReference type="OrthoDB" id="311172at2759"/>
<dbReference type="PhylomeDB" id="P81799"/>
<dbReference type="TreeFam" id="TF314158"/>
<dbReference type="Reactome" id="R-RNO-446210">
    <property type="pathway name" value="Synthesis of UDP-N-acetyl-glucosamine"/>
</dbReference>
<dbReference type="SABIO-RK" id="P81799"/>
<dbReference type="UniPathway" id="UPA00629"/>
<dbReference type="PRO" id="PR:P81799"/>
<dbReference type="Proteomes" id="UP000002494">
    <property type="component" value="Chromosome 4"/>
</dbReference>
<dbReference type="Bgee" id="ENSRNOG00000013911">
    <property type="expression patterns" value="Expressed in duodenum and 19 other cell types or tissues"/>
</dbReference>
<dbReference type="GO" id="GO:0005524">
    <property type="term" value="F:ATP binding"/>
    <property type="evidence" value="ECO:0007669"/>
    <property type="project" value="UniProtKB-KW"/>
</dbReference>
<dbReference type="GO" id="GO:0160047">
    <property type="term" value="F:muramyl dipeptide kinase activity"/>
    <property type="evidence" value="ECO:0000250"/>
    <property type="project" value="UniProtKB"/>
</dbReference>
<dbReference type="GO" id="GO:0045127">
    <property type="term" value="F:N-acetylglucosamine kinase activity"/>
    <property type="evidence" value="ECO:0000250"/>
    <property type="project" value="UniProtKB"/>
</dbReference>
<dbReference type="GO" id="GO:0009384">
    <property type="term" value="F:N-acylmannosamine kinase activity"/>
    <property type="evidence" value="ECO:0000266"/>
    <property type="project" value="RGD"/>
</dbReference>
<dbReference type="GO" id="GO:0042742">
    <property type="term" value="P:defense response to bacterium"/>
    <property type="evidence" value="ECO:0000250"/>
    <property type="project" value="UniProtKB"/>
</dbReference>
<dbReference type="GO" id="GO:0045087">
    <property type="term" value="P:innate immune response"/>
    <property type="evidence" value="ECO:0007669"/>
    <property type="project" value="UniProtKB-KW"/>
</dbReference>
<dbReference type="GO" id="GO:0006046">
    <property type="term" value="P:N-acetylglucosamine catabolic process"/>
    <property type="evidence" value="ECO:0000266"/>
    <property type="project" value="RGD"/>
</dbReference>
<dbReference type="GO" id="GO:0006044">
    <property type="term" value="P:N-acetylglucosamine metabolic process"/>
    <property type="evidence" value="ECO:0000266"/>
    <property type="project" value="RGD"/>
</dbReference>
<dbReference type="GO" id="GO:0019262">
    <property type="term" value="P:N-acetylneuraminate catabolic process"/>
    <property type="evidence" value="ECO:0007669"/>
    <property type="project" value="UniProtKB-UniPathway"/>
</dbReference>
<dbReference type="GO" id="GO:0070434">
    <property type="term" value="P:positive regulation of nucleotide-binding oligomerization domain containing 2 signaling pathway"/>
    <property type="evidence" value="ECO:0000250"/>
    <property type="project" value="UniProtKB"/>
</dbReference>
<dbReference type="GO" id="GO:0032495">
    <property type="term" value="P:response to muramyl dipeptide"/>
    <property type="evidence" value="ECO:0000250"/>
    <property type="project" value="UniProtKB"/>
</dbReference>
<dbReference type="GO" id="GO:0006048">
    <property type="term" value="P:UDP-N-acetylglucosamine biosynthetic process"/>
    <property type="evidence" value="ECO:0000266"/>
    <property type="project" value="RGD"/>
</dbReference>
<dbReference type="CDD" id="cd24078">
    <property type="entry name" value="ASKHA_NBD_NAGK_meta"/>
    <property type="match status" value="1"/>
</dbReference>
<dbReference type="FunFam" id="3.30.420.40:FF:000120">
    <property type="entry name" value="N-acetyl-D-glucosamine kinase isoform X1"/>
    <property type="match status" value="1"/>
</dbReference>
<dbReference type="Gene3D" id="3.30.420.40">
    <property type="match status" value="1"/>
</dbReference>
<dbReference type="InterPro" id="IPR002731">
    <property type="entry name" value="ATPase_BadF"/>
</dbReference>
<dbReference type="InterPro" id="IPR043129">
    <property type="entry name" value="ATPase_NBD"/>
</dbReference>
<dbReference type="InterPro" id="IPR039758">
    <property type="entry name" value="NAGK-like"/>
</dbReference>
<dbReference type="PANTHER" id="PTHR12862">
    <property type="entry name" value="BADF TYPE ATPASE DOMAIN-CONTAINING PROTEIN"/>
    <property type="match status" value="1"/>
</dbReference>
<dbReference type="PANTHER" id="PTHR12862:SF0">
    <property type="entry name" value="N-ACETYL-D-GLUCOSAMINE KINASE"/>
    <property type="match status" value="1"/>
</dbReference>
<dbReference type="Pfam" id="PF01869">
    <property type="entry name" value="BcrAD_BadFG"/>
    <property type="match status" value="1"/>
</dbReference>
<dbReference type="SUPFAM" id="SSF53067">
    <property type="entry name" value="Actin-like ATPase domain"/>
    <property type="match status" value="2"/>
</dbReference>
<protein>
    <recommendedName>
        <fullName>N-acetyl-D-glucosamine kinase</fullName>
        <shortName>N-acetylglucosamine kinase</shortName>
        <ecNumber evidence="3">2.7.1.59</ecNumber>
    </recommendedName>
    <alternativeName>
        <fullName>GlcNAc kinase</fullName>
    </alternativeName>
    <alternativeName>
        <fullName evidence="4">Muramyl dipeptide kinase</fullName>
        <ecNumber evidence="2">2.7.1.-</ecNumber>
    </alternativeName>
    <alternativeName>
        <fullName evidence="4">N-acetyl-D-mannosamine kinase</fullName>
        <ecNumber evidence="1">2.7.1.60</ecNumber>
    </alternativeName>
</protein>
<keyword id="KW-0007">Acetylation</keyword>
<keyword id="KW-0067">ATP-binding</keyword>
<keyword id="KW-0903">Direct protein sequencing</keyword>
<keyword id="KW-0391">Immunity</keyword>
<keyword id="KW-0399">Innate immunity</keyword>
<keyword id="KW-0418">Kinase</keyword>
<keyword id="KW-0547">Nucleotide-binding</keyword>
<keyword id="KW-0597">Phosphoprotein</keyword>
<keyword id="KW-1185">Reference proteome</keyword>
<keyword id="KW-0808">Transferase</keyword>
<gene>
    <name type="primary">Nagk</name>
</gene>
<reference key="1">
    <citation type="journal article" date="2004" name="Genome Res.">
        <title>The status, quality, and expansion of the NIH full-length cDNA project: the Mammalian Gene Collection (MGC).</title>
        <authorList>
            <consortium name="The MGC Project Team"/>
        </authorList>
    </citation>
    <scope>NUCLEOTIDE SEQUENCE [LARGE SCALE MRNA]</scope>
    <source>
        <tissue>Prostate</tissue>
    </source>
</reference>
<reference key="2">
    <citation type="journal article" date="1998" name="Eur. J. Biochem.">
        <title>Purification and characterization of N-acetylglucosamine kinase from rat liver. Comparison with UDP-N-acetylglucosamine 2-epimerase/N-acetylmannosamine kinase.</title>
        <authorList>
            <person name="Hinderlich S."/>
            <person name="Noehring S."/>
            <person name="Weise C."/>
            <person name="Franke P."/>
            <person name="Staesche R."/>
            <person name="Reutter W."/>
        </authorList>
    </citation>
    <scope>PROTEIN SEQUENCE OF 2-13; 69-92; 166-178; 198-207; 221-228; 233-235 AND 308-321</scope>
    <scope>ACETYLATION AT ALA-2</scope>
    <scope>ACTIVITY REGULATION</scope>
    <scope>SUBUNIT</scope>
    <scope>FUNCTION</scope>
    <scope>CATALYTIC ACTIVITY</scope>
    <source>
        <strain>Wistar</strain>
        <tissue>Liver</tissue>
    </source>
</reference>
<reference key="3">
    <citation type="journal article" date="2012" name="Nat. Commun.">
        <title>Quantitative maps of protein phosphorylation sites across 14 different rat organs and tissues.</title>
        <authorList>
            <person name="Lundby A."/>
            <person name="Secher A."/>
            <person name="Lage K."/>
            <person name="Nordsborg N.B."/>
            <person name="Dmytriyev A."/>
            <person name="Lundby C."/>
            <person name="Olsen J.V."/>
        </authorList>
    </citation>
    <scope>PHOSPHORYLATION [LARGE SCALE ANALYSIS] AT SER-76</scope>
    <scope>IDENTIFICATION BY MASS SPECTROMETRY [LARGE SCALE ANALYSIS]</scope>
</reference>
<comment type="function">
    <text evidence="1 2 3">Converts endogenous N-acetylglucosamine (GlcNAc), a major component of complex carbohydrates, from lysosomal degradation or nutritional sources into GlcNAc 6-phosphate (PubMed:9523722). Also has N-acetylmannosamine (ManNAc) kinase activity (By similarity). Involved in the N-glycolylneuraminic acid (Neu5Gc) degradation pathway (By similarity). Also involved in innate immunity by promoting detection of bacterial peptidoglycan by NOD2: acts by catalyzing phosphorylation of muramyl dipeptide (MDP), a fragment of bacterial peptidoglycan, to generate 6-O-phospho-muramyl dipeptide, which acts as a direct ligand for NOD2 (By similarity).</text>
</comment>
<comment type="catalytic activity">
    <reaction evidence="3">
        <text>N-acetyl-D-glucosamine + ATP = N-acetyl-D-glucosamine 6-phosphate + ADP + H(+)</text>
        <dbReference type="Rhea" id="RHEA:17417"/>
        <dbReference type="ChEBI" id="CHEBI:15378"/>
        <dbReference type="ChEBI" id="CHEBI:30616"/>
        <dbReference type="ChEBI" id="CHEBI:57513"/>
        <dbReference type="ChEBI" id="CHEBI:456216"/>
        <dbReference type="ChEBI" id="CHEBI:506227"/>
        <dbReference type="EC" id="2.7.1.59"/>
    </reaction>
    <physiologicalReaction direction="left-to-right" evidence="3">
        <dbReference type="Rhea" id="RHEA:17418"/>
    </physiologicalReaction>
</comment>
<comment type="catalytic activity">
    <reaction evidence="1">
        <text>aldehydo-N-acetyl-D-mannosamine + ATP = aldehydo-N-acetyl-D-mannosamine 6-phosphate + ADP + H(+)</text>
        <dbReference type="Rhea" id="RHEA:25253"/>
        <dbReference type="ChEBI" id="CHEBI:15378"/>
        <dbReference type="ChEBI" id="CHEBI:17122"/>
        <dbReference type="ChEBI" id="CHEBI:30616"/>
        <dbReference type="ChEBI" id="CHEBI:58557"/>
        <dbReference type="ChEBI" id="CHEBI:456216"/>
        <dbReference type="EC" id="2.7.1.60"/>
    </reaction>
    <physiologicalReaction direction="left-to-right" evidence="1">
        <dbReference type="Rhea" id="RHEA:25254"/>
    </physiologicalReaction>
</comment>
<comment type="catalytic activity">
    <reaction evidence="2">
        <text>N-acetyl-D-muramoyl-L-alanyl-D-isoglutamine + ATP = 6-O-phospho-N-acetyl-D-muramoyl-L-alanyl-D-isoglutamine + ADP + H(+)</text>
        <dbReference type="Rhea" id="RHEA:75935"/>
        <dbReference type="ChEBI" id="CHEBI:15378"/>
        <dbReference type="ChEBI" id="CHEBI:30616"/>
        <dbReference type="ChEBI" id="CHEBI:155830"/>
        <dbReference type="ChEBI" id="CHEBI:194492"/>
        <dbReference type="ChEBI" id="CHEBI:456216"/>
    </reaction>
    <physiologicalReaction direction="left-to-right" evidence="2">
        <dbReference type="Rhea" id="RHEA:75936"/>
    </physiologicalReaction>
</comment>
<comment type="activity regulation">
    <text evidence="3">Inhibited by the cysteine modifiers iodoacetamide, N-ethylmaleimide and 5,5'-dithiobis(2-nitrobenzoic acid).</text>
</comment>
<comment type="pathway">
    <text evidence="1">Amino-sugar metabolism; N-acetylneuraminate degradation.</text>
</comment>
<comment type="subunit">
    <text evidence="3">Homodimer.</text>
</comment>
<comment type="similarity">
    <text evidence="4">Belongs to the eukaryotic-type N-acetylglucosamine kinase family.</text>
</comment>
<organism>
    <name type="scientific">Rattus norvegicus</name>
    <name type="common">Rat</name>
    <dbReference type="NCBI Taxonomy" id="10116"/>
    <lineage>
        <taxon>Eukaryota</taxon>
        <taxon>Metazoa</taxon>
        <taxon>Chordata</taxon>
        <taxon>Craniata</taxon>
        <taxon>Vertebrata</taxon>
        <taxon>Euteleostomi</taxon>
        <taxon>Mammalia</taxon>
        <taxon>Eutheria</taxon>
        <taxon>Euarchontoglires</taxon>
        <taxon>Glires</taxon>
        <taxon>Rodentia</taxon>
        <taxon>Myomorpha</taxon>
        <taxon>Muroidea</taxon>
        <taxon>Muridae</taxon>
        <taxon>Murinae</taxon>
        <taxon>Rattus</taxon>
    </lineage>
</organism>